<proteinExistence type="evidence at protein level"/>
<keyword id="KW-0156">Chromatin regulator</keyword>
<keyword id="KW-0238">DNA-binding</keyword>
<keyword id="KW-1017">Isopeptide bond</keyword>
<keyword id="KW-0539">Nucleus</keyword>
<keyword id="KW-0597">Phosphoprotein</keyword>
<keyword id="KW-1185">Reference proteome</keyword>
<keyword id="KW-0804">Transcription</keyword>
<keyword id="KW-0805">Transcription regulation</keyword>
<keyword id="KW-0832">Ubl conjugation</keyword>
<feature type="chain" id="PRO_0000206718" description="High mobility group nucleosome-binding domain-containing protein 5">
    <location>
        <begin position="1"/>
        <end position="406"/>
    </location>
</feature>
<feature type="region of interest" description="Disordered" evidence="2">
    <location>
        <begin position="1"/>
        <end position="406"/>
    </location>
</feature>
<feature type="compositionally biased region" description="Basic residues" evidence="2">
    <location>
        <begin position="35"/>
        <end position="44"/>
    </location>
</feature>
<feature type="compositionally biased region" description="Basic and acidic residues" evidence="2">
    <location>
        <begin position="63"/>
        <end position="72"/>
    </location>
</feature>
<feature type="compositionally biased region" description="Basic and acidic residues" evidence="2">
    <location>
        <begin position="92"/>
        <end position="101"/>
    </location>
</feature>
<feature type="compositionally biased region" description="Basic and acidic residues" evidence="2">
    <location>
        <begin position="110"/>
        <end position="126"/>
    </location>
</feature>
<feature type="compositionally biased region" description="Basic and acidic residues" evidence="2">
    <location>
        <begin position="136"/>
        <end position="159"/>
    </location>
</feature>
<feature type="compositionally biased region" description="Basic and acidic residues" evidence="2">
    <location>
        <begin position="166"/>
        <end position="187"/>
    </location>
</feature>
<feature type="compositionally biased region" description="Acidic residues" evidence="2">
    <location>
        <begin position="188"/>
        <end position="200"/>
    </location>
</feature>
<feature type="compositionally biased region" description="Basic and acidic residues" evidence="2">
    <location>
        <begin position="201"/>
        <end position="239"/>
    </location>
</feature>
<feature type="compositionally biased region" description="Basic and acidic residues" evidence="2">
    <location>
        <begin position="246"/>
        <end position="266"/>
    </location>
</feature>
<feature type="compositionally biased region" description="Basic and acidic residues" evidence="2">
    <location>
        <begin position="272"/>
        <end position="284"/>
    </location>
</feature>
<feature type="compositionally biased region" description="Basic and acidic residues" evidence="2">
    <location>
        <begin position="290"/>
        <end position="311"/>
    </location>
</feature>
<feature type="compositionally biased region" description="Acidic residues" evidence="2">
    <location>
        <begin position="312"/>
        <end position="325"/>
    </location>
</feature>
<feature type="compositionally biased region" description="Basic and acidic residues" evidence="2">
    <location>
        <begin position="326"/>
        <end position="365"/>
    </location>
</feature>
<feature type="compositionally biased region" description="Acidic residues" evidence="2">
    <location>
        <begin position="366"/>
        <end position="376"/>
    </location>
</feature>
<feature type="compositionally biased region" description="Basic and acidic residues" evidence="2">
    <location>
        <begin position="377"/>
        <end position="406"/>
    </location>
</feature>
<feature type="modified residue" description="Phosphothreonine" evidence="1">
    <location>
        <position position="29"/>
    </location>
</feature>
<feature type="cross-link" description="Glycyl lysine isopeptide (Lys-Gly) (interchain with G-Cter in SUMO2)" evidence="1">
    <location>
        <position position="64"/>
    </location>
</feature>
<feature type="cross-link" description="Glycyl lysine isopeptide (Lys-Gly) (interchain with G-Cter in SUMO1); alternate" evidence="1">
    <location>
        <position position="98"/>
    </location>
</feature>
<feature type="cross-link" description="Glycyl lysine isopeptide (Lys-Gly) (interchain with G-Cter in SUMO2); alternate" evidence="1">
    <location>
        <position position="98"/>
    </location>
</feature>
<feature type="cross-link" description="Glycyl lysine isopeptide (Lys-Gly) (interchain with G-Cter in SUMO2)" evidence="1">
    <location>
        <position position="121"/>
    </location>
</feature>
<feature type="mutagenesis site" description="May abolish association with nucleosomes; when associated with E-22." evidence="5">
    <original>S</original>
    <variation>E</variation>
    <location>
        <position position="18"/>
    </location>
</feature>
<feature type="mutagenesis site" description="May abolish association with nucleosomes; when associated with E-18." evidence="5">
    <original>S</original>
    <variation>E</variation>
    <location>
        <position position="22"/>
    </location>
</feature>
<feature type="sequence conflict" description="In Ref. 1; AAF30179." evidence="6" ref="1">
    <original>M</original>
    <variation>V</variation>
    <location>
        <position position="74"/>
    </location>
</feature>
<feature type="sequence conflict" description="In Ref. 2; BAA33783." evidence="6" ref="2">
    <original>N</original>
    <variation>H</variation>
    <location>
        <position position="390"/>
    </location>
</feature>
<dbReference type="EMBL" id="AF213454">
    <property type="protein sequence ID" value="AAF30179.1"/>
    <property type="molecule type" value="mRNA"/>
</dbReference>
<dbReference type="EMBL" id="AB018374">
    <property type="protein sequence ID" value="BAA33783.2"/>
    <property type="molecule type" value="mRNA"/>
</dbReference>
<dbReference type="EMBL" id="AK013748">
    <property type="protein sequence ID" value="BAB28982.2"/>
    <property type="molecule type" value="mRNA"/>
</dbReference>
<dbReference type="EMBL" id="AK131996">
    <property type="protein sequence ID" value="BAE20926.1"/>
    <property type="molecule type" value="mRNA"/>
</dbReference>
<dbReference type="EMBL" id="AL954348">
    <property type="status" value="NOT_ANNOTATED_CDS"/>
    <property type="molecule type" value="Genomic_DNA"/>
</dbReference>
<dbReference type="EMBL" id="BC021626">
    <property type="protein sequence ID" value="AAH21626.1"/>
    <property type="molecule type" value="mRNA"/>
</dbReference>
<dbReference type="EMBL" id="BC083087">
    <property type="protein sequence ID" value="AAH83087.1"/>
    <property type="molecule type" value="mRNA"/>
</dbReference>
<dbReference type="CCDS" id="CCDS41101.1"/>
<dbReference type="RefSeq" id="NP_057919.2">
    <property type="nucleotide sequence ID" value="NM_016710.2"/>
</dbReference>
<dbReference type="BioGRID" id="206145">
    <property type="interactions" value="3"/>
</dbReference>
<dbReference type="FunCoup" id="Q9JL35">
    <property type="interactions" value="55"/>
</dbReference>
<dbReference type="STRING" id="10090.ENSMUSP00000033597"/>
<dbReference type="iPTMnet" id="Q9JL35"/>
<dbReference type="PhosphoSitePlus" id="Q9JL35"/>
<dbReference type="SwissPalm" id="Q9JL35"/>
<dbReference type="CPTAC" id="non-CPTAC-4040"/>
<dbReference type="jPOST" id="Q9JL35"/>
<dbReference type="PaxDb" id="10090-ENSMUSP00000033597"/>
<dbReference type="PeptideAtlas" id="Q9JL35"/>
<dbReference type="ProteomicsDB" id="269577"/>
<dbReference type="Pumba" id="Q9JL35"/>
<dbReference type="Antibodypedia" id="391">
    <property type="antibodies" value="135 antibodies from 24 providers"/>
</dbReference>
<dbReference type="DNASU" id="50887"/>
<dbReference type="Ensembl" id="ENSMUST00000033597.9">
    <property type="protein sequence ID" value="ENSMUSP00000033597.9"/>
    <property type="gene ID" value="ENSMUSG00000031245.9"/>
</dbReference>
<dbReference type="GeneID" id="50887"/>
<dbReference type="KEGG" id="mmu:50887"/>
<dbReference type="UCSC" id="uc009ucs.1">
    <property type="organism name" value="mouse"/>
</dbReference>
<dbReference type="AGR" id="MGI:1355295"/>
<dbReference type="CTD" id="79366"/>
<dbReference type="MGI" id="MGI:1355295">
    <property type="gene designation" value="Hmgn5"/>
</dbReference>
<dbReference type="VEuPathDB" id="HostDB:ENSMUSG00000031245"/>
<dbReference type="eggNOG" id="ENOG502QQGX">
    <property type="taxonomic scope" value="Eukaryota"/>
</dbReference>
<dbReference type="GeneTree" id="ENSGT00730000111570"/>
<dbReference type="HOGENOM" id="CLU_685059_0_0_1"/>
<dbReference type="InParanoid" id="Q9JL35"/>
<dbReference type="OMA" id="QDQGATQ"/>
<dbReference type="OrthoDB" id="9540224at2759"/>
<dbReference type="PhylomeDB" id="Q9JL35"/>
<dbReference type="TreeFam" id="TF105374"/>
<dbReference type="BioGRID-ORCS" id="50887">
    <property type="hits" value="3 hits in 79 CRISPR screens"/>
</dbReference>
<dbReference type="ChiTaRS" id="Hmgn5">
    <property type="organism name" value="mouse"/>
</dbReference>
<dbReference type="PRO" id="PR:Q9JL35"/>
<dbReference type="Proteomes" id="UP000000589">
    <property type="component" value="Chromosome X"/>
</dbReference>
<dbReference type="RNAct" id="Q9JL35">
    <property type="molecule type" value="protein"/>
</dbReference>
<dbReference type="Bgee" id="ENSMUSG00000031245">
    <property type="expression patterns" value="Expressed in gastrula and 262 other cell types or tissues"/>
</dbReference>
<dbReference type="GO" id="GO:0000785">
    <property type="term" value="C:chromatin"/>
    <property type="evidence" value="ECO:0007669"/>
    <property type="project" value="InterPro"/>
</dbReference>
<dbReference type="GO" id="GO:0005654">
    <property type="term" value="C:nucleoplasm"/>
    <property type="evidence" value="ECO:0000314"/>
    <property type="project" value="MGI"/>
</dbReference>
<dbReference type="GO" id="GO:0005634">
    <property type="term" value="C:nucleus"/>
    <property type="evidence" value="ECO:0000314"/>
    <property type="project" value="MGI"/>
</dbReference>
<dbReference type="GO" id="GO:0003682">
    <property type="term" value="F:chromatin binding"/>
    <property type="evidence" value="ECO:0000314"/>
    <property type="project" value="MGI"/>
</dbReference>
<dbReference type="GO" id="GO:0031492">
    <property type="term" value="F:nucleosomal DNA binding"/>
    <property type="evidence" value="ECO:0007669"/>
    <property type="project" value="InterPro"/>
</dbReference>
<dbReference type="GO" id="GO:0006325">
    <property type="term" value="P:chromatin organization"/>
    <property type="evidence" value="ECO:0000315"/>
    <property type="project" value="MGI"/>
</dbReference>
<dbReference type="GO" id="GO:0006749">
    <property type="term" value="P:glutathione metabolic process"/>
    <property type="evidence" value="ECO:0000315"/>
    <property type="project" value="MGI"/>
</dbReference>
<dbReference type="GO" id="GO:0006357">
    <property type="term" value="P:regulation of transcription by RNA polymerase II"/>
    <property type="evidence" value="ECO:0000314"/>
    <property type="project" value="MGI"/>
</dbReference>
<dbReference type="InterPro" id="IPR040164">
    <property type="entry name" value="HMGN5"/>
</dbReference>
<dbReference type="InterPro" id="IPR000079">
    <property type="entry name" value="HMGN_fam"/>
</dbReference>
<dbReference type="PANTHER" id="PTHR23145:SF6">
    <property type="entry name" value="HIGH MOBILITY GROUP NUCLEOSOME-BINDING DOMAIN-CONTAINING PROTEIN 5"/>
    <property type="match status" value="1"/>
</dbReference>
<dbReference type="PANTHER" id="PTHR23145">
    <property type="entry name" value="NUCLEOSOMAL BINDING PROTEIN 1"/>
    <property type="match status" value="1"/>
</dbReference>
<dbReference type="Pfam" id="PF01101">
    <property type="entry name" value="HMG14_17"/>
    <property type="match status" value="1"/>
</dbReference>
<dbReference type="PRINTS" id="PR00925">
    <property type="entry name" value="NONHISHMG17"/>
</dbReference>
<dbReference type="SMART" id="SM00527">
    <property type="entry name" value="HMG17"/>
    <property type="match status" value="1"/>
</dbReference>
<dbReference type="PROSITE" id="PS00355">
    <property type="entry name" value="HMG14_17"/>
    <property type="match status" value="1"/>
</dbReference>
<accession>Q9JL35</accession>
<accession>O88832</accession>
<accession>Q3V272</accession>
<accession>Q8VC71</accession>
<accession>Q9CUW1</accession>
<comment type="function">
    <text evidence="3 5">Preferentially binds to euchromatin and modulates cellular transcription by counteracting linker histone-mediated chromatin compaction.</text>
</comment>
<comment type="subcellular location">
    <subcellularLocation>
        <location evidence="3 5">Nucleus</location>
    </subcellularLocation>
    <text>Associates with nucleosomes in euchromatin and is largely excluded from constitutive heterochromatin.</text>
</comment>
<comment type="tissue specificity">
    <text evidence="3 5">Expressed in liver, spleen, lung, heart, kidney, muscle and brain (at protein level). Widely expressed with highest levels in submaxillary gland, thymus, kidney and liver and lowest levels in brain, lung, pancreas and eye.</text>
</comment>
<comment type="developmental stage">
    <text evidence="4">At 7.5 dpc, expression is detected in the ectoplacental cone but not in embryonic tissues. By 9.5 dpc and 12.5 dpc, strongly expressed in the giant trophoblast, spongiotrophoblast and decidual cells of the placenta (at protein level). At 9.5 dpc and 11.5 dpc, weakly expressed in the developing embryo.</text>
</comment>
<comment type="domain">
    <text evidence="5">Specifically targeted by its C-terminus to nucleosomes in euchromatin.</text>
</comment>
<comment type="similarity">
    <text evidence="6">Belongs to the HMGN family.</text>
</comment>
<sequence>MPKRKAAGDVSQEPKRRSARLSAMPVPFTPELKPKRASTSRKTKTTNVVEENKDASTIPIPETKPEDVKDECNMENAENGEAKIMEAPIPKMEAEEVKEQINEDTEEDGGEKKEAVAAEAKDDELKANIQDVEKDEDGKEHKDTGEEVEDGKIEEEGLNEKPGTAKSEDAEVSKDEEEKGDNEKGEDGKEEGDEKEEEKDDKEGDTGTEKEVKEQNKEAEEDDGKCKEEENKEVGKEGQPEEDGKEDLHEEVGKEDLHEEDGKEGQPEEDGKEIHHEEDGKEGQPEEDGKEYLHEEDGEEGQPKEDQKEGQPEEDGKEDQPEEDGKEGQCKEDGKEGHHEEGGKEDLHEEDGKEKDGGKEDRKEEGEQEVAVDEGSDENKVEAEEEGAENKDFKQDGEKEEPLSIV</sequence>
<evidence type="ECO:0000250" key="1">
    <source>
        <dbReference type="UniProtKB" id="P82970"/>
    </source>
</evidence>
<evidence type="ECO:0000256" key="2">
    <source>
        <dbReference type="SAM" id="MobiDB-lite"/>
    </source>
</evidence>
<evidence type="ECO:0000269" key="3">
    <source>
    </source>
</evidence>
<evidence type="ECO:0000269" key="4">
    <source>
    </source>
</evidence>
<evidence type="ECO:0000269" key="5">
    <source>
    </source>
</evidence>
<evidence type="ECO:0000305" key="6"/>
<gene>
    <name type="primary">Hmgn5</name>
    <name type="synonym">Garp45</name>
    <name type="synonym">Nsbp1</name>
</gene>
<organism>
    <name type="scientific">Mus musculus</name>
    <name type="common">Mouse</name>
    <dbReference type="NCBI Taxonomy" id="10090"/>
    <lineage>
        <taxon>Eukaryota</taxon>
        <taxon>Metazoa</taxon>
        <taxon>Chordata</taxon>
        <taxon>Craniata</taxon>
        <taxon>Vertebrata</taxon>
        <taxon>Euteleostomi</taxon>
        <taxon>Mammalia</taxon>
        <taxon>Eutheria</taxon>
        <taxon>Euarchontoglires</taxon>
        <taxon>Glires</taxon>
        <taxon>Rodentia</taxon>
        <taxon>Myomorpha</taxon>
        <taxon>Muroidea</taxon>
        <taxon>Muridae</taxon>
        <taxon>Murinae</taxon>
        <taxon>Mus</taxon>
        <taxon>Mus</taxon>
    </lineage>
</organism>
<protein>
    <recommendedName>
        <fullName>High mobility group nucleosome-binding domain-containing protein 5</fullName>
    </recommendedName>
    <alternativeName>
        <fullName>Nucleosome-binding protein 1</fullName>
    </alternativeName>
    <alternativeName>
        <fullName>Nucleosome-binding protein 45</fullName>
        <shortName>NBP-45</shortName>
    </alternativeName>
    <alternativeName>
        <fullName>Protein GARP45</fullName>
    </alternativeName>
</protein>
<reference key="1">
    <citation type="journal article" date="2000" name="J. Biol. Chem.">
        <title>NBP-45, a novel nucleosomal binding protein with a tissue-specific and developmentally regulated expression.</title>
        <authorList>
            <person name="Shirakawa H."/>
            <person name="Landsman D."/>
            <person name="Postnikov Y.V."/>
            <person name="Bustin M."/>
        </authorList>
    </citation>
    <scope>NUCLEOTIDE SEQUENCE [MRNA]</scope>
    <scope>FUNCTION</scope>
    <scope>SUBCELLULAR LOCATION</scope>
    <scope>TISSUE SPECIFICITY</scope>
</reference>
<reference key="2">
    <citation type="submission" date="1998-09" db="EMBL/GenBank/DDBJ databases">
        <authorList>
            <person name="Onoda G."/>
            <person name="Suzuki N."/>
            <person name="Saito H."/>
            <person name="Honda T."/>
            <person name="Sato H."/>
            <person name="Kuwano R."/>
        </authorList>
    </citation>
    <scope>NUCLEOTIDE SEQUENCE [MRNA]</scope>
</reference>
<reference key="3">
    <citation type="journal article" date="2005" name="Science">
        <title>The transcriptional landscape of the mammalian genome.</title>
        <authorList>
            <person name="Carninci P."/>
            <person name="Kasukawa T."/>
            <person name="Katayama S."/>
            <person name="Gough J."/>
            <person name="Frith M.C."/>
            <person name="Maeda N."/>
            <person name="Oyama R."/>
            <person name="Ravasi T."/>
            <person name="Lenhard B."/>
            <person name="Wells C."/>
            <person name="Kodzius R."/>
            <person name="Shimokawa K."/>
            <person name="Bajic V.B."/>
            <person name="Brenner S.E."/>
            <person name="Batalov S."/>
            <person name="Forrest A.R."/>
            <person name="Zavolan M."/>
            <person name="Davis M.J."/>
            <person name="Wilming L.G."/>
            <person name="Aidinis V."/>
            <person name="Allen J.E."/>
            <person name="Ambesi-Impiombato A."/>
            <person name="Apweiler R."/>
            <person name="Aturaliya R.N."/>
            <person name="Bailey T.L."/>
            <person name="Bansal M."/>
            <person name="Baxter L."/>
            <person name="Beisel K.W."/>
            <person name="Bersano T."/>
            <person name="Bono H."/>
            <person name="Chalk A.M."/>
            <person name="Chiu K.P."/>
            <person name="Choudhary V."/>
            <person name="Christoffels A."/>
            <person name="Clutterbuck D.R."/>
            <person name="Crowe M.L."/>
            <person name="Dalla E."/>
            <person name="Dalrymple B.P."/>
            <person name="de Bono B."/>
            <person name="Della Gatta G."/>
            <person name="di Bernardo D."/>
            <person name="Down T."/>
            <person name="Engstrom P."/>
            <person name="Fagiolini M."/>
            <person name="Faulkner G."/>
            <person name="Fletcher C.F."/>
            <person name="Fukushima T."/>
            <person name="Furuno M."/>
            <person name="Futaki S."/>
            <person name="Gariboldi M."/>
            <person name="Georgii-Hemming P."/>
            <person name="Gingeras T.R."/>
            <person name="Gojobori T."/>
            <person name="Green R.E."/>
            <person name="Gustincich S."/>
            <person name="Harbers M."/>
            <person name="Hayashi Y."/>
            <person name="Hensch T.K."/>
            <person name="Hirokawa N."/>
            <person name="Hill D."/>
            <person name="Huminiecki L."/>
            <person name="Iacono M."/>
            <person name="Ikeo K."/>
            <person name="Iwama A."/>
            <person name="Ishikawa T."/>
            <person name="Jakt M."/>
            <person name="Kanapin A."/>
            <person name="Katoh M."/>
            <person name="Kawasawa Y."/>
            <person name="Kelso J."/>
            <person name="Kitamura H."/>
            <person name="Kitano H."/>
            <person name="Kollias G."/>
            <person name="Krishnan S.P."/>
            <person name="Kruger A."/>
            <person name="Kummerfeld S.K."/>
            <person name="Kurochkin I.V."/>
            <person name="Lareau L.F."/>
            <person name="Lazarevic D."/>
            <person name="Lipovich L."/>
            <person name="Liu J."/>
            <person name="Liuni S."/>
            <person name="McWilliam S."/>
            <person name="Madan Babu M."/>
            <person name="Madera M."/>
            <person name="Marchionni L."/>
            <person name="Matsuda H."/>
            <person name="Matsuzawa S."/>
            <person name="Miki H."/>
            <person name="Mignone F."/>
            <person name="Miyake S."/>
            <person name="Morris K."/>
            <person name="Mottagui-Tabar S."/>
            <person name="Mulder N."/>
            <person name="Nakano N."/>
            <person name="Nakauchi H."/>
            <person name="Ng P."/>
            <person name="Nilsson R."/>
            <person name="Nishiguchi S."/>
            <person name="Nishikawa S."/>
            <person name="Nori F."/>
            <person name="Ohara O."/>
            <person name="Okazaki Y."/>
            <person name="Orlando V."/>
            <person name="Pang K.C."/>
            <person name="Pavan W.J."/>
            <person name="Pavesi G."/>
            <person name="Pesole G."/>
            <person name="Petrovsky N."/>
            <person name="Piazza S."/>
            <person name="Reed J."/>
            <person name="Reid J.F."/>
            <person name="Ring B.Z."/>
            <person name="Ringwald M."/>
            <person name="Rost B."/>
            <person name="Ruan Y."/>
            <person name="Salzberg S.L."/>
            <person name="Sandelin A."/>
            <person name="Schneider C."/>
            <person name="Schoenbach C."/>
            <person name="Sekiguchi K."/>
            <person name="Semple C.A."/>
            <person name="Seno S."/>
            <person name="Sessa L."/>
            <person name="Sheng Y."/>
            <person name="Shibata Y."/>
            <person name="Shimada H."/>
            <person name="Shimada K."/>
            <person name="Silva D."/>
            <person name="Sinclair B."/>
            <person name="Sperling S."/>
            <person name="Stupka E."/>
            <person name="Sugiura K."/>
            <person name="Sultana R."/>
            <person name="Takenaka Y."/>
            <person name="Taki K."/>
            <person name="Tammoja K."/>
            <person name="Tan S.L."/>
            <person name="Tang S."/>
            <person name="Taylor M.S."/>
            <person name="Tegner J."/>
            <person name="Teichmann S.A."/>
            <person name="Ueda H.R."/>
            <person name="van Nimwegen E."/>
            <person name="Verardo R."/>
            <person name="Wei C.L."/>
            <person name="Yagi K."/>
            <person name="Yamanishi H."/>
            <person name="Zabarovsky E."/>
            <person name="Zhu S."/>
            <person name="Zimmer A."/>
            <person name="Hide W."/>
            <person name="Bult C."/>
            <person name="Grimmond S.M."/>
            <person name="Teasdale R.D."/>
            <person name="Liu E.T."/>
            <person name="Brusic V."/>
            <person name="Quackenbush J."/>
            <person name="Wahlestedt C."/>
            <person name="Mattick J.S."/>
            <person name="Hume D.A."/>
            <person name="Kai C."/>
            <person name="Sasaki D."/>
            <person name="Tomaru Y."/>
            <person name="Fukuda S."/>
            <person name="Kanamori-Katayama M."/>
            <person name="Suzuki M."/>
            <person name="Aoki J."/>
            <person name="Arakawa T."/>
            <person name="Iida J."/>
            <person name="Imamura K."/>
            <person name="Itoh M."/>
            <person name="Kato T."/>
            <person name="Kawaji H."/>
            <person name="Kawagashira N."/>
            <person name="Kawashima T."/>
            <person name="Kojima M."/>
            <person name="Kondo S."/>
            <person name="Konno H."/>
            <person name="Nakano K."/>
            <person name="Ninomiya N."/>
            <person name="Nishio T."/>
            <person name="Okada M."/>
            <person name="Plessy C."/>
            <person name="Shibata K."/>
            <person name="Shiraki T."/>
            <person name="Suzuki S."/>
            <person name="Tagami M."/>
            <person name="Waki K."/>
            <person name="Watahiki A."/>
            <person name="Okamura-Oho Y."/>
            <person name="Suzuki H."/>
            <person name="Kawai J."/>
            <person name="Hayashizaki Y."/>
        </authorList>
    </citation>
    <scope>NUCLEOTIDE SEQUENCE [LARGE SCALE MRNA]</scope>
    <source>
        <strain>C57BL/6J</strain>
        <tissue>Embryo</tissue>
        <tissue>Hippocampus</tissue>
    </source>
</reference>
<reference key="4">
    <citation type="journal article" date="2009" name="PLoS Biol.">
        <title>Lineage-specific biology revealed by a finished genome assembly of the mouse.</title>
        <authorList>
            <person name="Church D.M."/>
            <person name="Goodstadt L."/>
            <person name="Hillier L.W."/>
            <person name="Zody M.C."/>
            <person name="Goldstein S."/>
            <person name="She X."/>
            <person name="Bult C.J."/>
            <person name="Agarwala R."/>
            <person name="Cherry J.L."/>
            <person name="DiCuccio M."/>
            <person name="Hlavina W."/>
            <person name="Kapustin Y."/>
            <person name="Meric P."/>
            <person name="Maglott D."/>
            <person name="Birtle Z."/>
            <person name="Marques A.C."/>
            <person name="Graves T."/>
            <person name="Zhou S."/>
            <person name="Teague B."/>
            <person name="Potamousis K."/>
            <person name="Churas C."/>
            <person name="Place M."/>
            <person name="Herschleb J."/>
            <person name="Runnheim R."/>
            <person name="Forrest D."/>
            <person name="Amos-Landgraf J."/>
            <person name="Schwartz D.C."/>
            <person name="Cheng Z."/>
            <person name="Lindblad-Toh K."/>
            <person name="Eichler E.E."/>
            <person name="Ponting C.P."/>
        </authorList>
    </citation>
    <scope>NUCLEOTIDE SEQUENCE [LARGE SCALE GENOMIC DNA]</scope>
    <source>
        <strain>C57BL/6J</strain>
    </source>
</reference>
<reference key="5">
    <citation type="journal article" date="2004" name="Genome Res.">
        <title>The status, quality, and expansion of the NIH full-length cDNA project: the Mammalian Gene Collection (MGC).</title>
        <authorList>
            <consortium name="The MGC Project Team"/>
        </authorList>
    </citation>
    <scope>NUCLEOTIDE SEQUENCE [LARGE SCALE MRNA]</scope>
    <source>
        <strain>FVB/N</strain>
        <tissue>Colon</tissue>
        <tissue>Limb</tissue>
    </source>
</reference>
<reference key="6">
    <citation type="journal article" date="2009" name="J. Cell. Biochem.">
        <title>The nucleosomal binding protein NSBP1 is highly expressed in the placenta and modulates the expression of differentiation markers in placental Rcho-1 cells.</title>
        <authorList>
            <person name="Shirakawa H."/>
            <person name="Rochman M."/>
            <person name="Furusawa T."/>
            <person name="Kuehn M.R."/>
            <person name="Horigome S."/>
            <person name="Haketa K."/>
            <person name="Sugita Y."/>
            <person name="Inada T."/>
            <person name="Komai M."/>
            <person name="Bustin M."/>
        </authorList>
    </citation>
    <scope>DEVELOPMENTAL STAGE</scope>
</reference>
<reference key="7">
    <citation type="journal article" date="2009" name="Mol. Cell">
        <title>The interaction of NSBP1/HMGN5 with nucleosomes in euchromatin counteracts linker histone-mediated chromatin compaction and modulates transcription.</title>
        <authorList>
            <person name="Rochman M."/>
            <person name="Postnikov Y."/>
            <person name="Correll S."/>
            <person name="Malicet C."/>
            <person name="Wincovitch S."/>
            <person name="Karpova T.S."/>
            <person name="McNally J.G."/>
            <person name="Wu X."/>
            <person name="Bubunenko N.A."/>
            <person name="Grigoryev S."/>
            <person name="Bustin M."/>
        </authorList>
    </citation>
    <scope>FUNCTION</scope>
    <scope>SUBCELLULAR LOCATION</scope>
    <scope>TISSUE SPECIFICITY</scope>
    <scope>DOMAIN</scope>
    <scope>MUTAGENESIS OF SER-18 AND SER-22</scope>
</reference>
<reference key="8">
    <citation type="journal article" date="2010" name="Cell">
        <title>A tissue-specific atlas of mouse protein phosphorylation and expression.</title>
        <authorList>
            <person name="Huttlin E.L."/>
            <person name="Jedrychowski M.P."/>
            <person name="Elias J.E."/>
            <person name="Goswami T."/>
            <person name="Rad R."/>
            <person name="Beausoleil S.A."/>
            <person name="Villen J."/>
            <person name="Haas W."/>
            <person name="Sowa M.E."/>
            <person name="Gygi S.P."/>
        </authorList>
    </citation>
    <scope>IDENTIFICATION BY MASS SPECTROMETRY [LARGE SCALE ANALYSIS]</scope>
    <source>
        <tissue>Brain</tissue>
        <tissue>Brown adipose tissue</tissue>
        <tissue>Kidney</tissue>
        <tissue>Liver</tissue>
        <tissue>Lung</tissue>
        <tissue>Pancreas</tissue>
        <tissue>Spleen</tissue>
        <tissue>Testis</tissue>
    </source>
</reference>
<name>HMGN5_MOUSE</name>